<geneLocation type="mitochondrion"/>
<reference key="1">
    <citation type="journal article" date="2007" name="Proc. Natl. Acad. Sci. U.S.A.">
        <title>Independent sorting-out of thousands of duplicated gene pairs in two yeast species descended from a whole-genome duplication.</title>
        <authorList>
            <person name="Scannell D.R."/>
            <person name="Frank A.C."/>
            <person name="Conant G.C."/>
            <person name="Byrne K.P."/>
            <person name="Woolfit M."/>
            <person name="Wolfe K.H."/>
        </authorList>
    </citation>
    <scope>NUCLEOTIDE SEQUENCE [LARGE SCALE GENOMIC DNA]</scope>
    <source>
        <strain>ATCC 22028 / DSM 70294 / BCRC 21397 / CBS 2163 / NBRC 10782 / NRRL Y-8283 / UCD 57-17</strain>
    </source>
</reference>
<protein>
    <recommendedName>
        <fullName evidence="2">Small ribosomal subunit protein uS3m</fullName>
    </recommendedName>
    <alternativeName>
        <fullName>Ribosomal protein VAR1, mitochondrial</fullName>
    </alternativeName>
</protein>
<proteinExistence type="inferred from homology"/>
<comment type="function">
    <text evidence="1">Essential for mitochondrial protein synthesis and required for the maturation of small ribosomal subunits.</text>
</comment>
<comment type="subcellular location">
    <subcellularLocation>
        <location>Mitochondrion</location>
    </subcellularLocation>
</comment>
<comment type="similarity">
    <text evidence="2">Belongs to the universal ribosomal protein uS3 family.</text>
</comment>
<name>RMAR_VANPO</name>
<feature type="chain" id="PRO_0000356874" description="Small ribosomal subunit protein uS3m">
    <location>
        <begin position="1"/>
        <end position="214"/>
    </location>
</feature>
<feature type="non-consecutive residues" evidence="2">
    <location>
        <begin position="63"/>
        <end position="64"/>
    </location>
</feature>
<accession>A6H4Q1</accession>
<accession>A6H4Q9</accession>
<organism>
    <name type="scientific">Vanderwaltozyma polyspora (strain ATCC 22028 / DSM 70294 / BCRC 21397 / CBS 2163 / NBRC 10782 / NRRL Y-8283 / UCD 57-17)</name>
    <name type="common">Kluyveromyces polysporus</name>
    <dbReference type="NCBI Taxonomy" id="436907"/>
    <lineage>
        <taxon>Eukaryota</taxon>
        <taxon>Fungi</taxon>
        <taxon>Dikarya</taxon>
        <taxon>Ascomycota</taxon>
        <taxon>Saccharomycotina</taxon>
        <taxon>Saccharomycetes</taxon>
        <taxon>Saccharomycetales</taxon>
        <taxon>Saccharomycetaceae</taxon>
        <taxon>Vanderwaltozyma</taxon>
    </lineage>
</organism>
<evidence type="ECO:0000250" key="1"/>
<evidence type="ECO:0000305" key="2"/>
<dbReference type="EMBL" id="AM698041">
    <property type="protein sequence ID" value="CAN85574.1"/>
    <property type="molecule type" value="Genomic_DNA"/>
</dbReference>
<dbReference type="EMBL" id="AM698041">
    <property type="protein sequence ID" value="CAN85582.1"/>
    <property type="molecule type" value="Genomic_DNA"/>
</dbReference>
<dbReference type="RefSeq" id="YP_001331013.1">
    <property type="nucleotide sequence ID" value="NC_009638.1"/>
</dbReference>
<dbReference type="RefSeq" id="YP_001331021.1">
    <property type="nucleotide sequence ID" value="NC_009638.1"/>
</dbReference>
<dbReference type="SMR" id="A6H4Q1"/>
<dbReference type="STRING" id="436907.A6H4Q1"/>
<dbReference type="KEGG" id="vpo:VapofMp09"/>
<dbReference type="InParanoid" id="A6H4Q1"/>
<dbReference type="Proteomes" id="UP000000267">
    <property type="component" value="Mitochondrion"/>
</dbReference>
<dbReference type="GO" id="GO:0005739">
    <property type="term" value="C:mitochondrion"/>
    <property type="evidence" value="ECO:0007669"/>
    <property type="project" value="UniProtKB-SubCell"/>
</dbReference>
<dbReference type="GO" id="GO:1990904">
    <property type="term" value="C:ribonucleoprotein complex"/>
    <property type="evidence" value="ECO:0007669"/>
    <property type="project" value="UniProtKB-KW"/>
</dbReference>
<dbReference type="GO" id="GO:0005840">
    <property type="term" value="C:ribosome"/>
    <property type="evidence" value="ECO:0007669"/>
    <property type="project" value="UniProtKB-KW"/>
</dbReference>
<dbReference type="GO" id="GO:0003735">
    <property type="term" value="F:structural constituent of ribosome"/>
    <property type="evidence" value="ECO:0007669"/>
    <property type="project" value="InterPro"/>
</dbReference>
<dbReference type="GO" id="GO:0006412">
    <property type="term" value="P:translation"/>
    <property type="evidence" value="ECO:0007669"/>
    <property type="project" value="InterPro"/>
</dbReference>
<dbReference type="InterPro" id="IPR007980">
    <property type="entry name" value="Ribosomal_uS3m_fun"/>
</dbReference>
<dbReference type="Pfam" id="PF05316">
    <property type="entry name" value="VAR1"/>
    <property type="match status" value="1"/>
</dbReference>
<gene>
    <name type="primary">VAR1</name>
    <name type="ORF">VapofMp09</name>
</gene>
<keyword id="KW-0496">Mitochondrion</keyword>
<keyword id="KW-1185">Reference proteome</keyword>
<keyword id="KW-0687">Ribonucleoprotein</keyword>
<keyword id="KW-0689">Ribosomal protein</keyword>
<sequence>MVFYMYNMMMNLNLLKEMRTNNKLVLNKLVLKNLLYWINKDTFKENMKIYSNYNNNYMNTNLQNKNIKRINNKLYRYMPIQSEWSNKLITKLYITNIKNMNKLLFKNIINNNNNDNFNIINLFNNKYNNNNIMMNLLMFKYLTGWSTQLKGRYTNNMSRTNTTVNKSGTFNNKKYTFIKNNYKLNYISANHNISNLYNVNKNGKYNLKIKLNYI</sequence>